<reference key="1">
    <citation type="submission" date="2001-07" db="EMBL/GenBank/DDBJ databases">
        <title>Genome-wide discovery and analysis of human seven transmembrane helix receptor genes.</title>
        <authorList>
            <person name="Suwa M."/>
            <person name="Sato T."/>
            <person name="Okouchi I."/>
            <person name="Arita M."/>
            <person name="Futami K."/>
            <person name="Matsumoto S."/>
            <person name="Tsutsumi S."/>
            <person name="Aburatani H."/>
            <person name="Asai K."/>
            <person name="Akiyama Y."/>
        </authorList>
    </citation>
    <scope>NUCLEOTIDE SEQUENCE [GENOMIC DNA]</scope>
</reference>
<keyword id="KW-1003">Cell membrane</keyword>
<keyword id="KW-1015">Disulfide bond</keyword>
<keyword id="KW-0297">G-protein coupled receptor</keyword>
<keyword id="KW-0325">Glycoprotein</keyword>
<keyword id="KW-0472">Membrane</keyword>
<keyword id="KW-0552">Olfaction</keyword>
<keyword id="KW-0675">Receptor</keyword>
<keyword id="KW-1185">Reference proteome</keyword>
<keyword id="KW-0716">Sensory transduction</keyword>
<keyword id="KW-0807">Transducer</keyword>
<keyword id="KW-0812">Transmembrane</keyword>
<keyword id="KW-1133">Transmembrane helix</keyword>
<name>OR6J1_HUMAN</name>
<feature type="chain" id="PRO_0000150628" description="Olfactory receptor 6J1">
    <location>
        <begin position="1"/>
        <end position="347"/>
    </location>
</feature>
<feature type="topological domain" description="Extracellular" evidence="1">
    <location>
        <begin position="1"/>
        <end position="24"/>
    </location>
</feature>
<feature type="transmembrane region" description="Helical; Name=1" evidence="1">
    <location>
        <begin position="25"/>
        <end position="45"/>
    </location>
</feature>
<feature type="topological domain" description="Cytoplasmic" evidence="1">
    <location>
        <begin position="46"/>
        <end position="53"/>
    </location>
</feature>
<feature type="transmembrane region" description="Helical; Name=2" evidence="1">
    <location>
        <begin position="54"/>
        <end position="74"/>
    </location>
</feature>
<feature type="topological domain" description="Extracellular" evidence="1">
    <location>
        <begin position="75"/>
        <end position="98"/>
    </location>
</feature>
<feature type="transmembrane region" description="Helical; Name=3" evidence="1">
    <location>
        <begin position="99"/>
        <end position="119"/>
    </location>
</feature>
<feature type="topological domain" description="Cytoplasmic" evidence="1">
    <location>
        <begin position="120"/>
        <end position="138"/>
    </location>
</feature>
<feature type="transmembrane region" description="Helical; Name=4" evidence="1">
    <location>
        <begin position="139"/>
        <end position="159"/>
    </location>
</feature>
<feature type="topological domain" description="Extracellular" evidence="1">
    <location>
        <begin position="160"/>
        <end position="196"/>
    </location>
</feature>
<feature type="transmembrane region" description="Helical; Name=5" evidence="1">
    <location>
        <begin position="197"/>
        <end position="216"/>
    </location>
</feature>
<feature type="topological domain" description="Cytoplasmic" evidence="1">
    <location>
        <begin position="217"/>
        <end position="236"/>
    </location>
</feature>
<feature type="transmembrane region" description="Helical; Name=6" evidence="1">
    <location>
        <begin position="237"/>
        <end position="257"/>
    </location>
</feature>
<feature type="topological domain" description="Extracellular" evidence="1">
    <location>
        <begin position="258"/>
        <end position="270"/>
    </location>
</feature>
<feature type="transmembrane region" description="Helical; Name=7" evidence="1">
    <location>
        <begin position="271"/>
        <end position="291"/>
    </location>
</feature>
<feature type="topological domain" description="Cytoplasmic" evidence="1">
    <location>
        <begin position="292"/>
        <end position="347"/>
    </location>
</feature>
<feature type="glycosylation site" description="N-linked (GlcNAc...) asparagine" evidence="1">
    <location>
        <position position="3"/>
    </location>
</feature>
<feature type="disulfide bond" evidence="2">
    <location>
        <begin position="96"/>
        <end position="188"/>
    </location>
</feature>
<feature type="sequence variant" id="VAR_087850" description="In dbSNP:rs1753430.">
    <original>S</original>
    <variation>P</variation>
    <location>
        <position position="250"/>
    </location>
</feature>
<sequence length="347" mass="38683">MGNWTAAVTEFVLLGFSLSREVELLLLVLLLPTFLLTLLGNLLIISTVLSCSRLHTPMYFFLCNLSILDILFTSVISPKVLANLGSRDKTISFAGCITQCYFYFFLGTVEFLLLTVMSYDRYATICCPLRYTTIMRPSVCIGTVVFSWVGGFLSVLFPTILISQLPFCGSNIINHFFCDSGPLLALACADTTAIELMDFMLSSMVILCCIVLVAYSYTYIILTIVRIPSASGRKKAFNTCASHLTIVIISSGITVFIYVTPSQKEYLEINKIPLVLSSVVTPFLNPFIYTLRNDTVQGVLRDVWVRVRGVFEKRMRAVLRSRLSSNKDHQGRACSSPPCVYSVKLQC</sequence>
<gene>
    <name type="primary">OR6J1</name>
    <name type="synonym">OR6J2</name>
</gene>
<organism>
    <name type="scientific">Homo sapiens</name>
    <name type="common">Human</name>
    <dbReference type="NCBI Taxonomy" id="9606"/>
    <lineage>
        <taxon>Eukaryota</taxon>
        <taxon>Metazoa</taxon>
        <taxon>Chordata</taxon>
        <taxon>Craniata</taxon>
        <taxon>Vertebrata</taxon>
        <taxon>Euteleostomi</taxon>
        <taxon>Mammalia</taxon>
        <taxon>Eutheria</taxon>
        <taxon>Euarchontoglires</taxon>
        <taxon>Primates</taxon>
        <taxon>Haplorrhini</taxon>
        <taxon>Catarrhini</taxon>
        <taxon>Hominidae</taxon>
        <taxon>Homo</taxon>
    </lineage>
</organism>
<accession>Q8NGC5</accession>
<dbReference type="EMBL" id="AB065892">
    <property type="protein sequence ID" value="BAC06108.1"/>
    <property type="molecule type" value="Genomic_DNA"/>
</dbReference>
<dbReference type="CCDS" id="CCDS86371.1"/>
<dbReference type="RefSeq" id="NP_001335162.1">
    <property type="nucleotide sequence ID" value="NM_001348233.2"/>
</dbReference>
<dbReference type="SMR" id="Q8NGC5"/>
<dbReference type="IntAct" id="Q8NGC5">
    <property type="interactions" value="1"/>
</dbReference>
<dbReference type="STRING" id="9606.ENSP00000437629"/>
<dbReference type="GlyCosmos" id="Q8NGC5">
    <property type="glycosylation" value="1 site, No reported glycans"/>
</dbReference>
<dbReference type="GlyGen" id="Q8NGC5">
    <property type="glycosylation" value="2 sites"/>
</dbReference>
<dbReference type="BioMuta" id="OR6J1"/>
<dbReference type="DMDM" id="38372666"/>
<dbReference type="MassIVE" id="Q8NGC5"/>
<dbReference type="PaxDb" id="9606-ENSP00000437629"/>
<dbReference type="PeptideAtlas" id="Q8NGC5"/>
<dbReference type="ProteomicsDB" id="73475"/>
<dbReference type="Antibodypedia" id="73085">
    <property type="antibodies" value="17 antibodies from 10 providers"/>
</dbReference>
<dbReference type="Ensembl" id="ENST00000540461.2">
    <property type="protein sequence ID" value="ENSP00000437629.1"/>
    <property type="gene ID" value="ENSG00000255804.2"/>
</dbReference>
<dbReference type="GeneID" id="79549"/>
<dbReference type="KEGG" id="hsa:79549"/>
<dbReference type="MANE-Select" id="ENST00000540461.2">
    <property type="protein sequence ID" value="ENSP00000437629.1"/>
    <property type="RefSeq nucleotide sequence ID" value="NM_001348233.2"/>
    <property type="RefSeq protein sequence ID" value="NP_001335162.1"/>
</dbReference>
<dbReference type="UCSC" id="uc058zia.1">
    <property type="organism name" value="human"/>
</dbReference>
<dbReference type="AGR" id="HGNC:14707"/>
<dbReference type="CTD" id="79549"/>
<dbReference type="GeneCards" id="OR6J1"/>
<dbReference type="HGNC" id="HGNC:14707">
    <property type="gene designation" value="OR6J1"/>
</dbReference>
<dbReference type="HPA" id="ENSG00000255804">
    <property type="expression patterns" value="Not detected"/>
</dbReference>
<dbReference type="neXtProt" id="NX_Q8NGC5"/>
<dbReference type="OpenTargets" id="ENSG00000255804"/>
<dbReference type="VEuPathDB" id="HostDB:ENSG00000255804"/>
<dbReference type="eggNOG" id="ENOG502SI3J">
    <property type="taxonomic scope" value="Eukaryota"/>
</dbReference>
<dbReference type="GeneTree" id="ENSGT01090000260086"/>
<dbReference type="HOGENOM" id="CLU_012526_1_1_1"/>
<dbReference type="InParanoid" id="Q8NGC5"/>
<dbReference type="OMA" id="ELMDFML"/>
<dbReference type="OrthoDB" id="9902777at2759"/>
<dbReference type="PAN-GO" id="Q8NGC5">
    <property type="GO annotations" value="1 GO annotation based on evolutionary models"/>
</dbReference>
<dbReference type="PhylomeDB" id="Q8NGC5"/>
<dbReference type="TreeFam" id="TF336833"/>
<dbReference type="PathwayCommons" id="Q8NGC5"/>
<dbReference type="Reactome" id="R-HSA-9752946">
    <property type="pathway name" value="Expression and translocation of olfactory receptors"/>
</dbReference>
<dbReference type="SignaLink" id="Q8NGC5"/>
<dbReference type="ChiTaRS" id="OR6J1">
    <property type="organism name" value="human"/>
</dbReference>
<dbReference type="Pharos" id="Q8NGC5">
    <property type="development level" value="Tdark"/>
</dbReference>
<dbReference type="PRO" id="PR:Q8NGC5"/>
<dbReference type="Proteomes" id="UP000005640">
    <property type="component" value="Chromosome 14"/>
</dbReference>
<dbReference type="RNAct" id="Q8NGC5">
    <property type="molecule type" value="protein"/>
</dbReference>
<dbReference type="GO" id="GO:0005886">
    <property type="term" value="C:plasma membrane"/>
    <property type="evidence" value="ECO:0007669"/>
    <property type="project" value="UniProtKB-SubCell"/>
</dbReference>
<dbReference type="GO" id="GO:0004930">
    <property type="term" value="F:G protein-coupled receptor activity"/>
    <property type="evidence" value="ECO:0007669"/>
    <property type="project" value="UniProtKB-KW"/>
</dbReference>
<dbReference type="GO" id="GO:0004984">
    <property type="term" value="F:olfactory receptor activity"/>
    <property type="evidence" value="ECO:0000318"/>
    <property type="project" value="GO_Central"/>
</dbReference>
<dbReference type="CDD" id="cd15912">
    <property type="entry name" value="7tmA_OR6C-like"/>
    <property type="match status" value="1"/>
</dbReference>
<dbReference type="FunFam" id="1.20.1070.10:FF:000010">
    <property type="entry name" value="Olfactory receptor"/>
    <property type="match status" value="1"/>
</dbReference>
<dbReference type="Gene3D" id="1.20.1070.10">
    <property type="entry name" value="Rhodopsin 7-helix transmembrane proteins"/>
    <property type="match status" value="1"/>
</dbReference>
<dbReference type="InterPro" id="IPR000276">
    <property type="entry name" value="GPCR_Rhodpsn"/>
</dbReference>
<dbReference type="InterPro" id="IPR017452">
    <property type="entry name" value="GPCR_Rhodpsn_7TM"/>
</dbReference>
<dbReference type="InterPro" id="IPR000725">
    <property type="entry name" value="Olfact_rcpt"/>
</dbReference>
<dbReference type="InterPro" id="IPR047132">
    <property type="entry name" value="Olfact_rcpt_6C-like"/>
</dbReference>
<dbReference type="PANTHER" id="PTHR26454">
    <property type="entry name" value="OLFACTORY RECEPTOR"/>
    <property type="match status" value="1"/>
</dbReference>
<dbReference type="PANTHER" id="PTHR26454:SF53">
    <property type="entry name" value="OLFACTORY RECEPTOR 6J1"/>
    <property type="match status" value="1"/>
</dbReference>
<dbReference type="Pfam" id="PF13853">
    <property type="entry name" value="7tm_4"/>
    <property type="match status" value="1"/>
</dbReference>
<dbReference type="PRINTS" id="PR00237">
    <property type="entry name" value="GPCRRHODOPSN"/>
</dbReference>
<dbReference type="PRINTS" id="PR00245">
    <property type="entry name" value="OLFACTORYR"/>
</dbReference>
<dbReference type="SUPFAM" id="SSF81321">
    <property type="entry name" value="Family A G protein-coupled receptor-like"/>
    <property type="match status" value="1"/>
</dbReference>
<dbReference type="PROSITE" id="PS00237">
    <property type="entry name" value="G_PROTEIN_RECEP_F1_1"/>
    <property type="match status" value="1"/>
</dbReference>
<dbReference type="PROSITE" id="PS50262">
    <property type="entry name" value="G_PROTEIN_RECEP_F1_2"/>
    <property type="match status" value="1"/>
</dbReference>
<protein>
    <recommendedName>
        <fullName>Olfactory receptor 6J1</fullName>
    </recommendedName>
    <alternativeName>
        <fullName>Olfactory receptor 6J2</fullName>
    </alternativeName>
</protein>
<comment type="function">
    <text evidence="3">Odorant receptor.</text>
</comment>
<comment type="subcellular location">
    <subcellularLocation>
        <location>Cell membrane</location>
        <topology>Multi-pass membrane protein</topology>
    </subcellularLocation>
</comment>
<comment type="similarity">
    <text evidence="2">Belongs to the G-protein coupled receptor 1 family.</text>
</comment>
<comment type="online information" name="Human Olfactory Receptor Data Exploratorium (HORDE)">
    <link uri="http://genome.weizmann.ac.il/horde/card/index/symbol:OR6J2"/>
</comment>
<evidence type="ECO:0000255" key="1"/>
<evidence type="ECO:0000255" key="2">
    <source>
        <dbReference type="PROSITE-ProRule" id="PRU00521"/>
    </source>
</evidence>
<evidence type="ECO:0000305" key="3"/>
<proteinExistence type="inferred from homology"/>